<reference key="1">
    <citation type="journal article" date="2006" name="PLoS Biol.">
        <title>Metabolic complementarity and genomics of the dual bacterial symbiosis of sharpshooters.</title>
        <authorList>
            <person name="Wu D."/>
            <person name="Daugherty S.C."/>
            <person name="Van Aken S.E."/>
            <person name="Pai G.H."/>
            <person name="Watkins K.L."/>
            <person name="Khouri H."/>
            <person name="Tallon L.J."/>
            <person name="Zaborsky J.M."/>
            <person name="Dunbar H.E."/>
            <person name="Tran P.L."/>
            <person name="Moran N.A."/>
            <person name="Eisen J.A."/>
        </authorList>
    </citation>
    <scope>NUCLEOTIDE SEQUENCE [LARGE SCALE GENOMIC DNA]</scope>
</reference>
<evidence type="ECO:0000255" key="1">
    <source>
        <dbReference type="HAMAP-Rule" id="MF_00505"/>
    </source>
</evidence>
<organism>
    <name type="scientific">Baumannia cicadellinicola subsp. Homalodisca coagulata</name>
    <dbReference type="NCBI Taxonomy" id="374463"/>
    <lineage>
        <taxon>Bacteria</taxon>
        <taxon>Pseudomonadati</taxon>
        <taxon>Pseudomonadota</taxon>
        <taxon>Gammaproteobacteria</taxon>
        <taxon>Candidatus Palibaumannia</taxon>
    </lineage>
</organism>
<protein>
    <recommendedName>
        <fullName evidence="1">Chaperone protein HtpG</fullName>
    </recommendedName>
    <alternativeName>
        <fullName evidence="1">Heat shock protein HtpG</fullName>
    </alternativeName>
    <alternativeName>
        <fullName evidence="1">High temperature protein G</fullName>
    </alternativeName>
</protein>
<sequence>MILKEQETLGFQSEVKQLLNLMIHSLYSNKEIFLRELISNASDAADKLRFLALAKPDLYEGNGELYVRIICNKEKRTITIIDNGIGMCRTEVIDNLGTIAKSGTKAFLETIDVKNSKNNQLIGQFGVGFYSAFIVAQKVIVRTRAAGASADEGVHWESTGEGDYIIAAINKPERGTEITLFLREGEDEFLDDWRIKNTIGKYSDHITLPIEIATNSENKNNNIITWEQINKAQALWTRNKVDVSDQEYKDFYKHLYHDSNDPISWSHNRVEGQQEYTSLLYIPASASWGIWNRDHKYGLKLYIKRVLIMDHADYFLPNYLRFVKGIIDCNDLPLNISREMLQHNRITQNLKNAITKRILSMLEKLATQNNEQYQNFWQHFGLVIKEGLAEDPNNSKSIARLLRFSTTHSKSMEQNVSLDEYVSRIAEQQEKIYYIIADSYAAANSSPHLELLQKKGIEVLLLHERIDAWMMNYLIEFNGKSFQLVSKADLKLDKFLNENTTEQKDMTKAFEPFIERVKKYLGDRIKEVRLTYSLTDTPAIVTIDSNNMTTHMAKLIVASGQNKPDIKYIFELNPLHPIVKKVSNTDNDIYFSEVIELLLDQALLVECGTLENPNQFVRRINKLLNHDTIVN</sequence>
<gene>
    <name evidence="1" type="primary">htpG</name>
    <name type="ordered locus">BCI_0117</name>
</gene>
<name>HTPG_BAUCH</name>
<feature type="chain" id="PRO_0000258503" description="Chaperone protein HtpG">
    <location>
        <begin position="1"/>
        <end position="631"/>
    </location>
</feature>
<feature type="region of interest" description="A; substrate-binding" evidence="1">
    <location>
        <begin position="1"/>
        <end position="338"/>
    </location>
</feature>
<feature type="region of interest" description="B" evidence="1">
    <location>
        <begin position="339"/>
        <end position="554"/>
    </location>
</feature>
<feature type="region of interest" description="C" evidence="1">
    <location>
        <begin position="555"/>
        <end position="631"/>
    </location>
</feature>
<proteinExistence type="inferred from homology"/>
<keyword id="KW-0067">ATP-binding</keyword>
<keyword id="KW-0143">Chaperone</keyword>
<keyword id="KW-0963">Cytoplasm</keyword>
<keyword id="KW-0547">Nucleotide-binding</keyword>
<keyword id="KW-1185">Reference proteome</keyword>
<keyword id="KW-0346">Stress response</keyword>
<comment type="function">
    <text evidence="1">Molecular chaperone. Has ATPase activity.</text>
</comment>
<comment type="subunit">
    <text evidence="1">Homodimer.</text>
</comment>
<comment type="subcellular location">
    <subcellularLocation>
        <location evidence="1">Cytoplasm</location>
    </subcellularLocation>
</comment>
<comment type="similarity">
    <text evidence="1">Belongs to the heat shock protein 90 family.</text>
</comment>
<accession>Q1LTX6</accession>
<dbReference type="EMBL" id="CP000238">
    <property type="protein sequence ID" value="ABF14114.1"/>
    <property type="molecule type" value="Genomic_DNA"/>
</dbReference>
<dbReference type="RefSeq" id="WP_011520321.1">
    <property type="nucleotide sequence ID" value="NC_007984.1"/>
</dbReference>
<dbReference type="SMR" id="Q1LTX6"/>
<dbReference type="STRING" id="374463.BCI_0117"/>
<dbReference type="KEGG" id="bci:BCI_0117"/>
<dbReference type="HOGENOM" id="CLU_006684_3_0_6"/>
<dbReference type="OrthoDB" id="9802640at2"/>
<dbReference type="Proteomes" id="UP000002427">
    <property type="component" value="Chromosome"/>
</dbReference>
<dbReference type="GO" id="GO:0005737">
    <property type="term" value="C:cytoplasm"/>
    <property type="evidence" value="ECO:0007669"/>
    <property type="project" value="UniProtKB-SubCell"/>
</dbReference>
<dbReference type="GO" id="GO:0005524">
    <property type="term" value="F:ATP binding"/>
    <property type="evidence" value="ECO:0007669"/>
    <property type="project" value="UniProtKB-UniRule"/>
</dbReference>
<dbReference type="GO" id="GO:0016887">
    <property type="term" value="F:ATP hydrolysis activity"/>
    <property type="evidence" value="ECO:0007669"/>
    <property type="project" value="InterPro"/>
</dbReference>
<dbReference type="GO" id="GO:0140662">
    <property type="term" value="F:ATP-dependent protein folding chaperone"/>
    <property type="evidence" value="ECO:0007669"/>
    <property type="project" value="InterPro"/>
</dbReference>
<dbReference type="GO" id="GO:0051082">
    <property type="term" value="F:unfolded protein binding"/>
    <property type="evidence" value="ECO:0007669"/>
    <property type="project" value="UniProtKB-UniRule"/>
</dbReference>
<dbReference type="CDD" id="cd16927">
    <property type="entry name" value="HATPase_Hsp90-like"/>
    <property type="match status" value="1"/>
</dbReference>
<dbReference type="FunFam" id="3.30.230.80:FF:000002">
    <property type="entry name" value="Molecular chaperone HtpG"/>
    <property type="match status" value="1"/>
</dbReference>
<dbReference type="FunFam" id="3.30.565.10:FF:000009">
    <property type="entry name" value="Molecular chaperone HtpG"/>
    <property type="match status" value="1"/>
</dbReference>
<dbReference type="Gene3D" id="3.30.230.80">
    <property type="match status" value="1"/>
</dbReference>
<dbReference type="Gene3D" id="3.40.50.11260">
    <property type="match status" value="1"/>
</dbReference>
<dbReference type="Gene3D" id="1.20.120.790">
    <property type="entry name" value="Heat shock protein 90, C-terminal domain"/>
    <property type="match status" value="1"/>
</dbReference>
<dbReference type="Gene3D" id="3.30.565.10">
    <property type="entry name" value="Histidine kinase-like ATPase, C-terminal domain"/>
    <property type="match status" value="1"/>
</dbReference>
<dbReference type="HAMAP" id="MF_00505">
    <property type="entry name" value="HSP90"/>
    <property type="match status" value="1"/>
</dbReference>
<dbReference type="InterPro" id="IPR036890">
    <property type="entry name" value="HATPase_C_sf"/>
</dbReference>
<dbReference type="InterPro" id="IPR019805">
    <property type="entry name" value="Heat_shock_protein_90_CS"/>
</dbReference>
<dbReference type="InterPro" id="IPR037196">
    <property type="entry name" value="HSP90_C"/>
</dbReference>
<dbReference type="InterPro" id="IPR001404">
    <property type="entry name" value="Hsp90_fam"/>
</dbReference>
<dbReference type="InterPro" id="IPR020575">
    <property type="entry name" value="Hsp90_N"/>
</dbReference>
<dbReference type="InterPro" id="IPR020568">
    <property type="entry name" value="Ribosomal_Su5_D2-typ_SF"/>
</dbReference>
<dbReference type="NCBIfam" id="NF003555">
    <property type="entry name" value="PRK05218.1"/>
    <property type="match status" value="1"/>
</dbReference>
<dbReference type="PANTHER" id="PTHR11528">
    <property type="entry name" value="HEAT SHOCK PROTEIN 90 FAMILY MEMBER"/>
    <property type="match status" value="1"/>
</dbReference>
<dbReference type="Pfam" id="PF13589">
    <property type="entry name" value="HATPase_c_3"/>
    <property type="match status" value="1"/>
</dbReference>
<dbReference type="Pfam" id="PF00183">
    <property type="entry name" value="HSP90"/>
    <property type="match status" value="1"/>
</dbReference>
<dbReference type="PIRSF" id="PIRSF002583">
    <property type="entry name" value="Hsp90"/>
    <property type="match status" value="1"/>
</dbReference>
<dbReference type="PRINTS" id="PR00775">
    <property type="entry name" value="HEATSHOCK90"/>
</dbReference>
<dbReference type="SMART" id="SM00387">
    <property type="entry name" value="HATPase_c"/>
    <property type="match status" value="1"/>
</dbReference>
<dbReference type="SUPFAM" id="SSF55874">
    <property type="entry name" value="ATPase domain of HSP90 chaperone/DNA topoisomerase II/histidine kinase"/>
    <property type="match status" value="1"/>
</dbReference>
<dbReference type="SUPFAM" id="SSF110942">
    <property type="entry name" value="HSP90 C-terminal domain"/>
    <property type="match status" value="1"/>
</dbReference>
<dbReference type="SUPFAM" id="SSF54211">
    <property type="entry name" value="Ribosomal protein S5 domain 2-like"/>
    <property type="match status" value="1"/>
</dbReference>
<dbReference type="PROSITE" id="PS00298">
    <property type="entry name" value="HSP90"/>
    <property type="match status" value="1"/>
</dbReference>